<dbReference type="EMBL" id="Z81074">
    <property type="protein sequence ID" value="CAB03043.1"/>
    <property type="molecule type" value="Genomic_DNA"/>
</dbReference>
<dbReference type="PIR" id="T21644">
    <property type="entry name" value="T21644"/>
</dbReference>
<dbReference type="RefSeq" id="NP_501784.1">
    <property type="nucleotide sequence ID" value="NM_069383.4"/>
</dbReference>
<dbReference type="SMR" id="O45435"/>
<dbReference type="STRING" id="6239.F32B6.9.1"/>
<dbReference type="iPTMnet" id="O45435"/>
<dbReference type="PaxDb" id="6239-F32B6.9"/>
<dbReference type="PeptideAtlas" id="O45435"/>
<dbReference type="EnsemblMetazoa" id="F32B6.9.1">
    <property type="protein sequence ID" value="F32B6.9.1"/>
    <property type="gene ID" value="WBGene00009323"/>
</dbReference>
<dbReference type="GeneID" id="185198"/>
<dbReference type="KEGG" id="cel:CELE_F32B6.9"/>
<dbReference type="UCSC" id="F32B6.9">
    <property type="organism name" value="c. elegans"/>
</dbReference>
<dbReference type="AGR" id="WB:WBGene00009323"/>
<dbReference type="CTD" id="185198"/>
<dbReference type="WormBase" id="F32B6.9">
    <property type="protein sequence ID" value="CE09864"/>
    <property type="gene ID" value="WBGene00009323"/>
    <property type="gene designation" value="best-13"/>
</dbReference>
<dbReference type="eggNOG" id="KOG3547">
    <property type="taxonomic scope" value="Eukaryota"/>
</dbReference>
<dbReference type="HOGENOM" id="CLU_018069_0_1_1"/>
<dbReference type="InParanoid" id="O45435"/>
<dbReference type="OMA" id="NDYEPLQ"/>
<dbReference type="OrthoDB" id="201595at2759"/>
<dbReference type="PhylomeDB" id="O45435"/>
<dbReference type="PRO" id="PR:O45435"/>
<dbReference type="Proteomes" id="UP000001940">
    <property type="component" value="Chromosome IV"/>
</dbReference>
<dbReference type="Bgee" id="WBGene00009323">
    <property type="expression patterns" value="Expressed in embryo and 4 other cell types or tissues"/>
</dbReference>
<dbReference type="GO" id="GO:0034707">
    <property type="term" value="C:chloride channel complex"/>
    <property type="evidence" value="ECO:0007669"/>
    <property type="project" value="UniProtKB-KW"/>
</dbReference>
<dbReference type="GO" id="GO:0005886">
    <property type="term" value="C:plasma membrane"/>
    <property type="evidence" value="ECO:0007669"/>
    <property type="project" value="UniProtKB-SubCell"/>
</dbReference>
<dbReference type="GO" id="GO:0005254">
    <property type="term" value="F:chloride channel activity"/>
    <property type="evidence" value="ECO:0007669"/>
    <property type="project" value="UniProtKB-KW"/>
</dbReference>
<dbReference type="InterPro" id="IPR000615">
    <property type="entry name" value="Bestrophin"/>
</dbReference>
<dbReference type="InterPro" id="IPR021134">
    <property type="entry name" value="Bestrophin-like"/>
</dbReference>
<dbReference type="PANTHER" id="PTHR10736">
    <property type="entry name" value="BESTROPHIN"/>
    <property type="match status" value="1"/>
</dbReference>
<dbReference type="PANTHER" id="PTHR10736:SF28">
    <property type="entry name" value="BESTROPHIN HOMOLOG 13"/>
    <property type="match status" value="1"/>
</dbReference>
<dbReference type="Pfam" id="PF01062">
    <property type="entry name" value="Bestrophin"/>
    <property type="match status" value="1"/>
</dbReference>
<protein>
    <recommendedName>
        <fullName>Bestrophin homolog 13</fullName>
    </recommendedName>
</protein>
<organism>
    <name type="scientific">Caenorhabditis elegans</name>
    <dbReference type="NCBI Taxonomy" id="6239"/>
    <lineage>
        <taxon>Eukaryota</taxon>
        <taxon>Metazoa</taxon>
        <taxon>Ecdysozoa</taxon>
        <taxon>Nematoda</taxon>
        <taxon>Chromadorea</taxon>
        <taxon>Rhabditida</taxon>
        <taxon>Rhabditina</taxon>
        <taxon>Rhabditomorpha</taxon>
        <taxon>Rhabditoidea</taxon>
        <taxon>Rhabditidae</taxon>
        <taxon>Peloderinae</taxon>
        <taxon>Caenorhabditis</taxon>
    </lineage>
</organism>
<gene>
    <name type="primary">best-13</name>
    <name type="ORF">F32B6.9</name>
</gene>
<reference key="1">
    <citation type="journal article" date="1998" name="Science">
        <title>Genome sequence of the nematode C. elegans: a platform for investigating biology.</title>
        <authorList>
            <consortium name="The C. elegans sequencing consortium"/>
        </authorList>
    </citation>
    <scope>NUCLEOTIDE SEQUENCE [LARGE SCALE GENOMIC DNA]</scope>
    <source>
        <strain>Bristol N2</strain>
    </source>
</reference>
<keyword id="KW-1003">Cell membrane</keyword>
<keyword id="KW-0868">Chloride</keyword>
<keyword id="KW-0869">Chloride channel</keyword>
<keyword id="KW-0407">Ion channel</keyword>
<keyword id="KW-0406">Ion transport</keyword>
<keyword id="KW-0472">Membrane</keyword>
<keyword id="KW-1185">Reference proteome</keyword>
<keyword id="KW-0812">Transmembrane</keyword>
<keyword id="KW-1133">Transmembrane helix</keyword>
<keyword id="KW-0813">Transport</keyword>
<name>BST13_CAEEL</name>
<feature type="chain" id="PRO_0000143130" description="Bestrophin homolog 13">
    <location>
        <begin position="1"/>
        <end position="413"/>
    </location>
</feature>
<feature type="transmembrane region" description="Helical" evidence="2">
    <location>
        <begin position="29"/>
        <end position="49"/>
    </location>
</feature>
<feature type="transmembrane region" description="Helical" evidence="2">
    <location>
        <begin position="72"/>
        <end position="92"/>
    </location>
</feature>
<feature type="transmembrane region" description="Helical" evidence="2">
    <location>
        <begin position="236"/>
        <end position="256"/>
    </location>
</feature>
<feature type="transmembrane region" description="Helical" evidence="2">
    <location>
        <begin position="272"/>
        <end position="292"/>
    </location>
</feature>
<proteinExistence type="inferred from homology"/>
<sequence>MTISYSGNVIRILLRWKGSIWRTAWKELLIYLILYYSVRVFYLKGIDLIDDDEDDRLKMRRMFETFCRQCDSYTRLIPLTFLLGFYVSNVVARWWRQFETLYWPEDILSVLCTVLHQHDEKSKRRRHTIARYLNLANALAWRDISSKIRLRFPSVHSLIESGLLTEKEYQILEAMHAENESSRWITPLHWIQLIMRQVEEEHKPTASLFNQFVGELRIFRQSLRKLYSYDWVCVPLVYTQVAALATYSFFFFTLFGRQPLFPDIETGKELDLVVPVFTIVQFLFFVGWFKVGQDLMRPFGLDDDDIELNYILDRNVRISFAIVNQLQESPIPDFESNDDKLWHEMHPPTKDGETSPIPRIPQLPHSKYSKQLSEHPPRLHAYVPIDDGKGSIKDLESHHGCVSLKKDKKHISW</sequence>
<accession>O45435</accession>
<comment type="function">
    <text evidence="1">Forms chloride channels.</text>
</comment>
<comment type="subunit">
    <text evidence="1">Forms oligomers.</text>
</comment>
<comment type="subcellular location">
    <subcellularLocation>
        <location evidence="1">Cell membrane</location>
        <topology evidence="1">Multi-pass membrane protein</topology>
    </subcellularLocation>
</comment>
<comment type="similarity">
    <text evidence="3">Belongs to the anion channel-forming bestrophin (TC 1.A.46) family. Calcium-sensitive chloride channel subfamily.</text>
</comment>
<evidence type="ECO:0000250" key="1"/>
<evidence type="ECO:0000255" key="2"/>
<evidence type="ECO:0000305" key="3"/>